<sequence>MNPRATPVLVLSLALGTTITISSNHWVLAWTGLEINTLAIIPLISKSHHPRAVEAATKYFLTQAAASALVLFSSMTNAWATGQWDITQLNHPTSCLLLTAAIAIKLGLVPFHFWFPEVLQGSPLMTALLLSTLMKFPPLTLLLMTSKSLNPALLTAMALASTALGGWMGLNQTQTRKILAFSSISHLGWIAIILVYSPKLALLTFYLYTIMTSAVFMALNKIKALNLSMILISWTKTPVLNTTLMLVLLSLAGLPPLTGFMPKWLIIQELTKQEMTPAAMAIAMLSLLSLFFYLRLAYHSTITLPPNSSNHMKQWYTSKPPSTPTAILASLSILLLPLSPMVHAIV</sequence>
<evidence type="ECO:0000250" key="1"/>
<evidence type="ECO:0000255" key="2"/>
<evidence type="ECO:0000305" key="3"/>
<dbReference type="EC" id="7.1.1.2"/>
<dbReference type="EMBL" id="AF059165">
    <property type="protein sequence ID" value="AAC14859.1"/>
    <property type="molecule type" value="Genomic_DNA"/>
</dbReference>
<dbReference type="SMR" id="O63796"/>
<dbReference type="GO" id="GO:0005743">
    <property type="term" value="C:mitochondrial inner membrane"/>
    <property type="evidence" value="ECO:0007669"/>
    <property type="project" value="UniProtKB-SubCell"/>
</dbReference>
<dbReference type="GO" id="GO:0008137">
    <property type="term" value="F:NADH dehydrogenase (ubiquinone) activity"/>
    <property type="evidence" value="ECO:0007669"/>
    <property type="project" value="UniProtKB-EC"/>
</dbReference>
<dbReference type="GO" id="GO:0006120">
    <property type="term" value="P:mitochondrial electron transport, NADH to ubiquinone"/>
    <property type="evidence" value="ECO:0007669"/>
    <property type="project" value="InterPro"/>
</dbReference>
<dbReference type="InterPro" id="IPR050175">
    <property type="entry name" value="Complex_I_Subunit_2"/>
</dbReference>
<dbReference type="InterPro" id="IPR010933">
    <property type="entry name" value="NADH_DH_su2_C"/>
</dbReference>
<dbReference type="InterPro" id="IPR003917">
    <property type="entry name" value="NADH_UbQ_OxRdtase_chain2"/>
</dbReference>
<dbReference type="InterPro" id="IPR001750">
    <property type="entry name" value="ND/Mrp_TM"/>
</dbReference>
<dbReference type="PANTHER" id="PTHR46552">
    <property type="entry name" value="NADH-UBIQUINONE OXIDOREDUCTASE CHAIN 2"/>
    <property type="match status" value="1"/>
</dbReference>
<dbReference type="PANTHER" id="PTHR46552:SF1">
    <property type="entry name" value="NADH-UBIQUINONE OXIDOREDUCTASE CHAIN 2"/>
    <property type="match status" value="1"/>
</dbReference>
<dbReference type="Pfam" id="PF06444">
    <property type="entry name" value="NADH_dehy_S2_C"/>
    <property type="match status" value="1"/>
</dbReference>
<dbReference type="Pfam" id="PF00361">
    <property type="entry name" value="Proton_antipo_M"/>
    <property type="match status" value="1"/>
</dbReference>
<dbReference type="PRINTS" id="PR01436">
    <property type="entry name" value="NADHDHGNASE2"/>
</dbReference>
<gene>
    <name type="primary">MT-ND2</name>
    <name type="synonym">MTND2</name>
    <name type="synonym">NADH2</name>
    <name type="synonym">ND2</name>
</gene>
<proteinExistence type="inferred from homology"/>
<name>NU2M_ANACA</name>
<reference key="1">
    <citation type="journal article" date="1998" name="Mol. Phylogenet. Evol.">
        <title>Comparing molecular evolution in two mitochondrial protein coding genes (cytochrome b and ND2) in the dabbling ducks (Tribe: Anatini).</title>
        <authorList>
            <person name="Johnson K.P."/>
            <person name="Sorenson M.D."/>
        </authorList>
    </citation>
    <scope>NUCLEOTIDE SEQUENCE [GENOMIC DNA]</scope>
</reference>
<keyword id="KW-0249">Electron transport</keyword>
<keyword id="KW-0472">Membrane</keyword>
<keyword id="KW-0496">Mitochondrion</keyword>
<keyword id="KW-0999">Mitochondrion inner membrane</keyword>
<keyword id="KW-0520">NAD</keyword>
<keyword id="KW-0679">Respiratory chain</keyword>
<keyword id="KW-1278">Translocase</keyword>
<keyword id="KW-0812">Transmembrane</keyword>
<keyword id="KW-1133">Transmembrane helix</keyword>
<keyword id="KW-0813">Transport</keyword>
<keyword id="KW-0830">Ubiquinone</keyword>
<protein>
    <recommendedName>
        <fullName>NADH-ubiquinone oxidoreductase chain 2</fullName>
        <ecNumber>7.1.1.2</ecNumber>
    </recommendedName>
    <alternativeName>
        <fullName>NADH dehydrogenase subunit 2</fullName>
    </alternativeName>
</protein>
<organism>
    <name type="scientific">Anas capensis</name>
    <name type="common">Cape teal</name>
    <name type="synonym">African Cape teal</name>
    <dbReference type="NCBI Taxonomy" id="8837"/>
    <lineage>
        <taxon>Eukaryota</taxon>
        <taxon>Metazoa</taxon>
        <taxon>Chordata</taxon>
        <taxon>Craniata</taxon>
        <taxon>Vertebrata</taxon>
        <taxon>Euteleostomi</taxon>
        <taxon>Archelosauria</taxon>
        <taxon>Archosauria</taxon>
        <taxon>Dinosauria</taxon>
        <taxon>Saurischia</taxon>
        <taxon>Theropoda</taxon>
        <taxon>Coelurosauria</taxon>
        <taxon>Aves</taxon>
        <taxon>Neognathae</taxon>
        <taxon>Galloanserae</taxon>
        <taxon>Anseriformes</taxon>
        <taxon>Anatidae</taxon>
        <taxon>Anatinae</taxon>
        <taxon>Anas</taxon>
    </lineage>
</organism>
<feature type="chain" id="PRO_0000117543" description="NADH-ubiquinone oxidoreductase chain 2">
    <location>
        <begin position="1"/>
        <end position="346"/>
    </location>
</feature>
<feature type="transmembrane region" description="Helical" evidence="2">
    <location>
        <begin position="25"/>
        <end position="45"/>
    </location>
</feature>
<feature type="transmembrane region" description="Helical" evidence="2">
    <location>
        <begin position="60"/>
        <end position="80"/>
    </location>
</feature>
<feature type="transmembrane region" description="Helical" evidence="2">
    <location>
        <begin position="95"/>
        <end position="115"/>
    </location>
</feature>
<feature type="transmembrane region" description="Helical" evidence="2">
    <location>
        <begin position="124"/>
        <end position="144"/>
    </location>
</feature>
<feature type="transmembrane region" description="Helical" evidence="2">
    <location>
        <begin position="149"/>
        <end position="169"/>
    </location>
</feature>
<feature type="transmembrane region" description="Helical" evidence="2">
    <location>
        <begin position="178"/>
        <end position="195"/>
    </location>
</feature>
<feature type="transmembrane region" description="Helical" evidence="2">
    <location>
        <begin position="200"/>
        <end position="219"/>
    </location>
</feature>
<feature type="transmembrane region" description="Helical" evidence="2">
    <location>
        <begin position="247"/>
        <end position="267"/>
    </location>
</feature>
<feature type="transmembrane region" description="Helical" evidence="2">
    <location>
        <begin position="274"/>
        <end position="294"/>
    </location>
</feature>
<feature type="transmembrane region" description="Helical" evidence="2">
    <location>
        <begin position="326"/>
        <end position="346"/>
    </location>
</feature>
<accession>O63796</accession>
<comment type="function">
    <text evidence="1">Core subunit of the mitochondrial membrane respiratory chain NADH dehydrogenase (Complex I) that is believed to belong to the minimal assembly required for catalysis. Complex I functions in the transfer of electrons from NADH to the respiratory chain. The immediate electron acceptor for the enzyme is believed to be ubiquinone (By similarity).</text>
</comment>
<comment type="catalytic activity">
    <reaction>
        <text>a ubiquinone + NADH + 5 H(+)(in) = a ubiquinol + NAD(+) + 4 H(+)(out)</text>
        <dbReference type="Rhea" id="RHEA:29091"/>
        <dbReference type="Rhea" id="RHEA-COMP:9565"/>
        <dbReference type="Rhea" id="RHEA-COMP:9566"/>
        <dbReference type="ChEBI" id="CHEBI:15378"/>
        <dbReference type="ChEBI" id="CHEBI:16389"/>
        <dbReference type="ChEBI" id="CHEBI:17976"/>
        <dbReference type="ChEBI" id="CHEBI:57540"/>
        <dbReference type="ChEBI" id="CHEBI:57945"/>
        <dbReference type="EC" id="7.1.1.2"/>
    </reaction>
</comment>
<comment type="subcellular location">
    <subcellularLocation>
        <location>Mitochondrion inner membrane</location>
        <topology>Multi-pass membrane protein</topology>
    </subcellularLocation>
</comment>
<comment type="similarity">
    <text evidence="3">Belongs to the complex I subunit 2 family.</text>
</comment>
<geneLocation type="mitochondrion"/>